<evidence type="ECO:0000250" key="1"/>
<evidence type="ECO:0000256" key="2">
    <source>
        <dbReference type="SAM" id="MobiDB-lite"/>
    </source>
</evidence>
<evidence type="ECO:0000269" key="3">
    <source>
    </source>
</evidence>
<evidence type="ECO:0000305" key="4"/>
<protein>
    <recommendedName>
        <fullName>Myristoylated alanine-rich C-kinase substrate</fullName>
        <shortName>MARCKS</shortName>
    </recommendedName>
</protein>
<dbReference type="EMBL" id="M31650">
    <property type="protein sequence ID" value="AAA48946.1"/>
    <property type="molecule type" value="mRNA"/>
</dbReference>
<dbReference type="PIR" id="A41400">
    <property type="entry name" value="A41400"/>
</dbReference>
<dbReference type="RefSeq" id="NP_990811.1">
    <property type="nucleotide sequence ID" value="NM_205480.1"/>
</dbReference>
<dbReference type="BMRB" id="P16527"/>
<dbReference type="BioGRID" id="676720">
    <property type="interactions" value="1"/>
</dbReference>
<dbReference type="FunCoup" id="P16527">
    <property type="interactions" value="1775"/>
</dbReference>
<dbReference type="STRING" id="9031.ENSGALP00000050791"/>
<dbReference type="GlyGen" id="P16527">
    <property type="glycosylation" value="1 site"/>
</dbReference>
<dbReference type="iPTMnet" id="P16527"/>
<dbReference type="GeneID" id="396473"/>
<dbReference type="KEGG" id="gga:396473"/>
<dbReference type="CTD" id="4082"/>
<dbReference type="VEuPathDB" id="HostDB:geneid_396473"/>
<dbReference type="InParanoid" id="P16527"/>
<dbReference type="OrthoDB" id="9950867at2759"/>
<dbReference type="PRO" id="PR:P16527"/>
<dbReference type="Proteomes" id="UP000000539">
    <property type="component" value="Unassembled WGS sequence"/>
</dbReference>
<dbReference type="GO" id="GO:0032432">
    <property type="term" value="C:actin filament bundle"/>
    <property type="evidence" value="ECO:0000318"/>
    <property type="project" value="GO_Central"/>
</dbReference>
<dbReference type="GO" id="GO:0005737">
    <property type="term" value="C:cytoplasm"/>
    <property type="evidence" value="ECO:0000318"/>
    <property type="project" value="GO_Central"/>
</dbReference>
<dbReference type="GO" id="GO:0005886">
    <property type="term" value="C:plasma membrane"/>
    <property type="evidence" value="ECO:0000318"/>
    <property type="project" value="GO_Central"/>
</dbReference>
<dbReference type="GO" id="GO:0051015">
    <property type="term" value="F:actin filament binding"/>
    <property type="evidence" value="ECO:0000318"/>
    <property type="project" value="GO_Central"/>
</dbReference>
<dbReference type="GO" id="GO:0005516">
    <property type="term" value="F:calmodulin binding"/>
    <property type="evidence" value="ECO:0007669"/>
    <property type="project" value="UniProtKB-KW"/>
</dbReference>
<dbReference type="GO" id="GO:0007015">
    <property type="term" value="P:actin filament organization"/>
    <property type="evidence" value="ECO:0000318"/>
    <property type="project" value="GO_Central"/>
</dbReference>
<dbReference type="GO" id="GO:0007417">
    <property type="term" value="P:central nervous system development"/>
    <property type="evidence" value="ECO:0000318"/>
    <property type="project" value="GO_Central"/>
</dbReference>
<dbReference type="InterPro" id="IPR002101">
    <property type="entry name" value="MARCKS"/>
</dbReference>
<dbReference type="PANTHER" id="PTHR14353:SF9">
    <property type="entry name" value="MYRISTOYLATED ALANINE-RICH C-KINASE SUBSTRATE"/>
    <property type="match status" value="1"/>
</dbReference>
<dbReference type="PANTHER" id="PTHR14353">
    <property type="entry name" value="MYRISTOYLATED ALANINE-RICH C-KINASE SUBSTRATE MARCKS"/>
    <property type="match status" value="1"/>
</dbReference>
<dbReference type="Pfam" id="PF02063">
    <property type="entry name" value="MARCKS"/>
    <property type="match status" value="1"/>
</dbReference>
<dbReference type="PRINTS" id="PR00963">
    <property type="entry name" value="MARCKS"/>
</dbReference>
<dbReference type="PROSITE" id="PS00826">
    <property type="entry name" value="MARCKS_1"/>
    <property type="match status" value="1"/>
</dbReference>
<dbReference type="PROSITE" id="PS00827">
    <property type="entry name" value="MARCKS_2"/>
    <property type="match status" value="1"/>
</dbReference>
<keyword id="KW-0009">Actin-binding</keyword>
<keyword id="KW-0112">Calmodulin-binding</keyword>
<keyword id="KW-0963">Cytoplasm</keyword>
<keyword id="KW-0206">Cytoskeleton</keyword>
<keyword id="KW-0903">Direct protein sequencing</keyword>
<keyword id="KW-0449">Lipoprotein</keyword>
<keyword id="KW-0472">Membrane</keyword>
<keyword id="KW-0519">Myristate</keyword>
<keyword id="KW-1185">Reference proteome</keyword>
<sequence length="281" mass="27728">MGAQFSKTAAKGEAAAEKPGEAVAASPSKANGQENGHVKVNGDASPAAAEAGKEEVQANGSAPAEETGKEEAASSEPASEKEAAEAESTEPASPAEGEASPKTEEGATPSSSSETPKKKKKRFSFKKSFKLSGFSFKKNKKEAGEGAESEGGAAAAAEGGKEEAAAAAPEAAGGEEGKAAAEEASAAAAGSREAAKEEAGDSQEAKSDEAAPEKATGEEAPAAEEQQQQQQQEKAAEEAGAAATSEAGSGEQEAAPAEEPAAARQEAPSESSPEGPAEPAE</sequence>
<gene>
    <name type="primary">MARCKS</name>
</gene>
<name>MARCS_CHICK</name>
<feature type="initiator methionine" description="Removed">
    <location>
        <position position="1"/>
    </location>
</feature>
<feature type="chain" id="PRO_0000157151" description="Myristoylated alanine-rich C-kinase substrate">
    <location>
        <begin position="2"/>
        <end position="281"/>
    </location>
</feature>
<feature type="region of interest" description="Disordered" evidence="2">
    <location>
        <begin position="1"/>
        <end position="281"/>
    </location>
</feature>
<feature type="region of interest" description="Calmodulin-binding (PSD)">
    <location>
        <begin position="117"/>
        <end position="141"/>
    </location>
</feature>
<feature type="compositionally biased region" description="Basic and acidic residues" evidence="2">
    <location>
        <begin position="66"/>
        <end position="84"/>
    </location>
</feature>
<feature type="compositionally biased region" description="Low complexity" evidence="2">
    <location>
        <begin position="89"/>
        <end position="98"/>
    </location>
</feature>
<feature type="compositionally biased region" description="Basic residues" evidence="2">
    <location>
        <begin position="117"/>
        <end position="129"/>
    </location>
</feature>
<feature type="compositionally biased region" description="Low complexity" evidence="2">
    <location>
        <begin position="182"/>
        <end position="192"/>
    </location>
</feature>
<feature type="compositionally biased region" description="Basic and acidic residues" evidence="2">
    <location>
        <begin position="193"/>
        <end position="217"/>
    </location>
</feature>
<feature type="compositionally biased region" description="Low complexity" evidence="2">
    <location>
        <begin position="218"/>
        <end position="281"/>
    </location>
</feature>
<feature type="lipid moiety-binding region" description="N-myristoyl glycine" evidence="3">
    <location>
        <position position="2"/>
    </location>
</feature>
<comment type="function">
    <text>MARCKS is the most prominent cellular substrate for protein kinase C. This protein binds calmodulin, actin, and synapsin. MARCKS is a filamentous (F) actin cross-linking protein.</text>
</comment>
<comment type="subcellular location">
    <subcellularLocation>
        <location evidence="4">Cytoplasm</location>
        <location evidence="4">Cytoskeleton</location>
    </subcellularLocation>
    <subcellularLocation>
        <location evidence="1">Membrane</location>
        <topology evidence="1">Lipid-anchor</topology>
    </subcellularLocation>
</comment>
<comment type="similarity">
    <text evidence="4">Belongs to the MARCKS family.</text>
</comment>
<proteinExistence type="evidence at protein level"/>
<accession>P16527</accession>
<reference key="1">
    <citation type="journal article" date="1989" name="Mol. Endocrinol.">
        <title>Molecular cloning, sequence, and expression of a cDNA encoding the chicken myristoylated alanine-rich C kinase substrate (MARCKS).</title>
        <authorList>
            <person name="Graff J.M."/>
            <person name="Stumpo D.J."/>
            <person name="Blackshear P.J."/>
        </authorList>
    </citation>
    <scope>NUCLEOTIDE SEQUENCE [MRNA]</scope>
    <scope>MYRISTOYLATION AT GLY-2</scope>
    <scope>PARTIAL PROTEIN SEQUENCE</scope>
</reference>
<organism>
    <name type="scientific">Gallus gallus</name>
    <name type="common">Chicken</name>
    <dbReference type="NCBI Taxonomy" id="9031"/>
    <lineage>
        <taxon>Eukaryota</taxon>
        <taxon>Metazoa</taxon>
        <taxon>Chordata</taxon>
        <taxon>Craniata</taxon>
        <taxon>Vertebrata</taxon>
        <taxon>Euteleostomi</taxon>
        <taxon>Archelosauria</taxon>
        <taxon>Archosauria</taxon>
        <taxon>Dinosauria</taxon>
        <taxon>Saurischia</taxon>
        <taxon>Theropoda</taxon>
        <taxon>Coelurosauria</taxon>
        <taxon>Aves</taxon>
        <taxon>Neognathae</taxon>
        <taxon>Galloanserae</taxon>
        <taxon>Galliformes</taxon>
        <taxon>Phasianidae</taxon>
        <taxon>Phasianinae</taxon>
        <taxon>Gallus</taxon>
    </lineage>
</organism>